<keyword id="KW-1015">Disulfide bond</keyword>
<keyword id="KW-0325">Glycoprotein</keyword>
<keyword id="KW-0326">Glycosidase</keyword>
<keyword id="KW-0378">Hydrolase</keyword>
<keyword id="KW-0472">Membrane</keyword>
<keyword id="KW-0735">Signal-anchor</keyword>
<keyword id="KW-0808">Transferase</keyword>
<keyword id="KW-0812">Transmembrane</keyword>
<keyword id="KW-1133">Transmembrane helix</keyword>
<keyword id="KW-0926">Vacuole</keyword>
<comment type="function">
    <text evidence="3">Involved in the synthesis of fructan of the inulin neoseries. Has no 1-FFT activity.</text>
</comment>
<comment type="catalytic activity">
    <reaction evidence="3">
        <text>[1-beta-D-fructofuranosyl-(2-&gt;1)-]m+1 alpha-D-glucopyranoside + [1-beta-D-fructofuranosyl-(2-&gt;1)-]n+1 alpha-D-glucopyranoside = [1-beta-D-fructofuranosyl-(2-&gt;1)-]m alpha-D-glucopyranoside + [1-beta-D-fructofuranosyl-(2-&gt;1)-]n+1 beta-D-fructofuranosyl-(2-&gt;6)-alpha-D-glucopyranoside (m &gt; 0, n &gt;= 0).</text>
        <dbReference type="EC" id="2.4.1.243"/>
    </reaction>
</comment>
<comment type="biophysicochemical properties">
    <phDependence>
        <text evidence="3 4">Optimum pH is 5.5. Stable between pH 5.0-6.0.</text>
    </phDependence>
    <temperatureDependence>
        <text evidence="3 4">Stable up to 37 degrees Celsius.</text>
    </temperatureDependence>
</comment>
<comment type="subcellular location">
    <subcellularLocation>
        <location evidence="5">Vacuole membrane</location>
        <topology evidence="5">Single-pass type II membrane protein</topology>
    </subcellularLocation>
</comment>
<comment type="induction">
    <text>Inhibited by Hg(2+), p-chloromercuribenzoate and Ag(+).</text>
</comment>
<comment type="PTM">
    <text evidence="1">Might be processed in two N-terminal and C-terminal proteolytic fragments.</text>
</comment>
<comment type="similarity">
    <text evidence="5">Belongs to the glycosyl hydrolase 32 family.</text>
</comment>
<sequence length="610" mass="68315">MATSLQAPILGSRPPRRTLRFLSFALFSALVLVVASFSSRKSESGSGLRSGSVEPEYAWTNQMLTWQRAGFHFRTVKNYMNDPSGPMYYKGWYHLFYQHNPNYAYWGDISWGHAVSRDLLNWFHLPVAVKPDRWYDIYGVWTGSITVMPDDGRVVMLYTGGTKEKYQIMSVAMAADPSDPLLVEWVKYDEVNPVLRPPPGIGLTDFRDPNPIWYNTTDSTWQLVIGSKNDSLQHTGIAMVYTTKDFINLTLLPGVLHSVDHVGMWECVDLFPVASSGPLIGRGLDRSMMLADNVKHVLKASMNDEWHDYYAIGSYDVATHRWVPDDESVDVGIGMRIDWGKFYASRTFYDPVKERRVMWGYVGETDSGDADVAKGWASFQGIPRTVLFDVKTGTNVLTWPIEEVESLRMTRKDFSDIVVNKGSTVELHVGDANQLDIEAEFEMDKDALETAIEADIGYNCSSSGGAVSRGVLGPFGLFVLANQDLTELTATYFYVSRATDGSLHTHLCHDEMRSSKANDIVKRVVGGTFTVLDGELLSLRILVDHSIVESFAQGGRTSATSRVYPTEAIYERARVFLFNNATGATITAKAVKVWQMNSTSNQYYPFTSSN</sequence>
<proteinExistence type="evidence at protein level"/>
<name>GFT_ASPOF</name>
<dbReference type="EC" id="2.4.1.243" evidence="3"/>
<dbReference type="EMBL" id="AB084283">
    <property type="protein sequence ID" value="BAD89564.1"/>
    <property type="molecule type" value="mRNA"/>
</dbReference>
<dbReference type="SMR" id="Q5FC15"/>
<dbReference type="CAZy" id="GH32">
    <property type="family name" value="Glycoside Hydrolase Family 32"/>
</dbReference>
<dbReference type="GlyCosmos" id="Q5FC15">
    <property type="glycosylation" value="6 sites, No reported glycans"/>
</dbReference>
<dbReference type="KEGG" id="ag:BAD89564"/>
<dbReference type="BRENDA" id="2.4.1.243">
    <property type="organism ID" value="486"/>
</dbReference>
<dbReference type="GO" id="GO:0005774">
    <property type="term" value="C:vacuolar membrane"/>
    <property type="evidence" value="ECO:0007669"/>
    <property type="project" value="UniProtKB-SubCell"/>
</dbReference>
<dbReference type="GO" id="GO:0033841">
    <property type="term" value="F:6G-fructosyltransferase activity"/>
    <property type="evidence" value="ECO:0007669"/>
    <property type="project" value="UniProtKB-EC"/>
</dbReference>
<dbReference type="GO" id="GO:0004553">
    <property type="term" value="F:hydrolase activity, hydrolyzing O-glycosyl compounds"/>
    <property type="evidence" value="ECO:0007669"/>
    <property type="project" value="InterPro"/>
</dbReference>
<dbReference type="GO" id="GO:0005975">
    <property type="term" value="P:carbohydrate metabolic process"/>
    <property type="evidence" value="ECO:0007669"/>
    <property type="project" value="InterPro"/>
</dbReference>
<dbReference type="CDD" id="cd18624">
    <property type="entry name" value="GH32_Fruct1-like"/>
    <property type="match status" value="1"/>
</dbReference>
<dbReference type="FunFam" id="2.60.120.560:FF:000002">
    <property type="entry name" value="Beta-fructofuranosidase, insoluble isoenzyme CWINV1"/>
    <property type="match status" value="1"/>
</dbReference>
<dbReference type="Gene3D" id="2.60.120.560">
    <property type="entry name" value="Exo-inulinase, domain 1"/>
    <property type="match status" value="1"/>
</dbReference>
<dbReference type="Gene3D" id="2.115.10.20">
    <property type="entry name" value="Glycosyl hydrolase domain, family 43"/>
    <property type="match status" value="1"/>
</dbReference>
<dbReference type="InterPro" id="IPR013320">
    <property type="entry name" value="ConA-like_dom_sf"/>
</dbReference>
<dbReference type="InterPro" id="IPR050551">
    <property type="entry name" value="Fructan_Metab_Enzymes"/>
</dbReference>
<dbReference type="InterPro" id="IPR001362">
    <property type="entry name" value="Glyco_hydro_32"/>
</dbReference>
<dbReference type="InterPro" id="IPR013189">
    <property type="entry name" value="Glyco_hydro_32_C"/>
</dbReference>
<dbReference type="InterPro" id="IPR013148">
    <property type="entry name" value="Glyco_hydro_32_N"/>
</dbReference>
<dbReference type="InterPro" id="IPR023296">
    <property type="entry name" value="Glyco_hydro_beta-prop_sf"/>
</dbReference>
<dbReference type="PANTHER" id="PTHR31953">
    <property type="entry name" value="BETA-FRUCTOFURANOSIDASE, INSOLUBLE ISOENZYME CWINV1-RELATED"/>
    <property type="match status" value="1"/>
</dbReference>
<dbReference type="Pfam" id="PF08244">
    <property type="entry name" value="Glyco_hydro_32C"/>
    <property type="match status" value="1"/>
</dbReference>
<dbReference type="Pfam" id="PF00251">
    <property type="entry name" value="Glyco_hydro_32N"/>
    <property type="match status" value="1"/>
</dbReference>
<dbReference type="SMART" id="SM00640">
    <property type="entry name" value="Glyco_32"/>
    <property type="match status" value="1"/>
</dbReference>
<dbReference type="SUPFAM" id="SSF75005">
    <property type="entry name" value="Arabinanase/levansucrase/invertase"/>
    <property type="match status" value="1"/>
</dbReference>
<dbReference type="SUPFAM" id="SSF49899">
    <property type="entry name" value="Concanavalin A-like lectins/glucanases"/>
    <property type="match status" value="1"/>
</dbReference>
<feature type="chain" id="PRO_0000310732" description="6(G)-fructosyltransferase">
    <location>
        <begin position="1"/>
        <end position="610"/>
    </location>
</feature>
<feature type="topological domain" description="Cytoplasmic" evidence="2">
    <location>
        <begin position="1"/>
        <end position="20"/>
    </location>
</feature>
<feature type="transmembrane region" description="Helical; Signal-anchor for type II membrane protein" evidence="2">
    <location>
        <begin position="21"/>
        <end position="38"/>
    </location>
</feature>
<feature type="topological domain" description="Vacuolar" evidence="2">
    <location>
        <begin position="39"/>
        <end position="610"/>
    </location>
</feature>
<feature type="active site" evidence="1">
    <location>
        <position position="82"/>
    </location>
</feature>
<feature type="binding site" evidence="1">
    <location>
        <begin position="79"/>
        <end position="82"/>
    </location>
    <ligand>
        <name>substrate</name>
    </ligand>
</feature>
<feature type="binding site" evidence="1">
    <location>
        <position position="98"/>
    </location>
    <ligand>
        <name>substrate</name>
    </ligand>
</feature>
<feature type="binding site" evidence="1">
    <location>
        <position position="106"/>
    </location>
    <ligand>
        <name>substrate</name>
    </ligand>
</feature>
<feature type="binding site" evidence="1">
    <location>
        <begin position="141"/>
        <end position="142"/>
    </location>
    <ligand>
        <name>substrate</name>
    </ligand>
</feature>
<feature type="binding site" evidence="1">
    <location>
        <begin position="207"/>
        <end position="208"/>
    </location>
    <ligand>
        <name>substrate</name>
    </ligand>
</feature>
<feature type="binding site" evidence="1">
    <location>
        <position position="266"/>
    </location>
    <ligand>
        <name>substrate</name>
    </ligand>
</feature>
<feature type="glycosylation site" description="N-linked (GlcNAc...) asparagine" evidence="2">
    <location>
        <position position="215"/>
    </location>
</feature>
<feature type="glycosylation site" description="N-linked (GlcNAc...) asparagine" evidence="2">
    <location>
        <position position="229"/>
    </location>
</feature>
<feature type="glycosylation site" description="N-linked (GlcNAc...) asparagine" evidence="2">
    <location>
        <position position="248"/>
    </location>
</feature>
<feature type="glycosylation site" description="N-linked (GlcNAc...) asparagine" evidence="2">
    <location>
        <position position="459"/>
    </location>
</feature>
<feature type="glycosylation site" description="N-linked (GlcNAc...) asparagine" evidence="2">
    <location>
        <position position="580"/>
    </location>
</feature>
<feature type="glycosylation site" description="N-linked (GlcNAc...) asparagine" evidence="2">
    <location>
        <position position="597"/>
    </location>
</feature>
<feature type="disulfide bond" evidence="1">
    <location>
        <begin position="460"/>
        <end position="508"/>
    </location>
</feature>
<protein>
    <recommendedName>
        <fullName>6(G)-fructosyltransferase</fullName>
        <ecNumber evidence="3">2.4.1.243</ecNumber>
    </recommendedName>
    <alternativeName>
        <fullName>6G-FFT</fullName>
        <shortName>6GFT</shortName>
    </alternativeName>
    <alternativeName>
        <fullName>6G-fructosyltransferase</fullName>
    </alternativeName>
    <alternativeName>
        <fullName>AoFT1</fullName>
    </alternativeName>
</protein>
<accession>Q5FC15</accession>
<organism>
    <name type="scientific">Asparagus officinalis</name>
    <name type="common">Garden asparagus</name>
    <dbReference type="NCBI Taxonomy" id="4686"/>
    <lineage>
        <taxon>Eukaryota</taxon>
        <taxon>Viridiplantae</taxon>
        <taxon>Streptophyta</taxon>
        <taxon>Embryophyta</taxon>
        <taxon>Tracheophyta</taxon>
        <taxon>Spermatophyta</taxon>
        <taxon>Magnoliopsida</taxon>
        <taxon>Liliopsida</taxon>
        <taxon>Asparagales</taxon>
        <taxon>Asparagaceae</taxon>
        <taxon>Asparagoideae</taxon>
        <taxon>Asparagus</taxon>
    </lineage>
</organism>
<reference key="1">
    <citation type="journal article" date="2005" name="New Phytol.">
        <title>Molecular characterization and expression of a cDNA encoding fructan:fructan 6G-fructosyltransferase from asparagus (Asparagus officinalis).</title>
        <authorList>
            <person name="Ueno K."/>
            <person name="Onodera S."/>
            <person name="Kawakami A."/>
            <person name="Yoshida M."/>
            <person name="Shiomi N."/>
        </authorList>
    </citation>
    <scope>NUCLEOTIDE SEQUENCE [MRNA]</scope>
    <scope>BIOPHYSICOCHEMICAL PROPERTIES</scope>
    <scope>FUNCTION</scope>
    <scope>CATALYTIC ACTIVITY</scope>
    <source>
        <strain>cv. Zuiyuu</strain>
    </source>
</reference>
<reference key="2">
    <citation type="journal article" date="1981" name="Carbohydr. Res.">
        <title>Purification and characterisation of 6G-fructosyltransferase from the roots of asparagus (Asparagus officinalis L.).</title>
        <authorList>
            <person name="Shiomi N."/>
        </authorList>
    </citation>
    <scope>BIOPHYSICOCHEMICAL PROPERTIES</scope>
    <scope>INHIBITION</scope>
</reference>
<gene>
    <name type="primary">FT1</name>
</gene>
<evidence type="ECO:0000250" key="1"/>
<evidence type="ECO:0000255" key="2"/>
<evidence type="ECO:0000269" key="3">
    <source>
    </source>
</evidence>
<evidence type="ECO:0000269" key="4">
    <source ref="2"/>
</evidence>
<evidence type="ECO:0000305" key="5"/>